<proteinExistence type="inferred from homology"/>
<evidence type="ECO:0000255" key="1">
    <source>
        <dbReference type="HAMAP-Rule" id="MF_00223"/>
    </source>
</evidence>
<keyword id="KW-0342">GTP-binding</keyword>
<keyword id="KW-0378">Hydrolase</keyword>
<keyword id="KW-0479">Metal-binding</keyword>
<keyword id="KW-0547">Nucleotide-binding</keyword>
<keyword id="KW-0554">One-carbon metabolism</keyword>
<keyword id="KW-0862">Zinc</keyword>
<protein>
    <recommendedName>
        <fullName evidence="1">GTP cyclohydrolase 1</fullName>
        <ecNumber evidence="1">3.5.4.16</ecNumber>
    </recommendedName>
    <alternativeName>
        <fullName evidence="1">GTP cyclohydrolase I</fullName>
        <shortName evidence="1">GTP-CH-I</shortName>
    </alternativeName>
</protein>
<dbReference type="EC" id="3.5.4.16" evidence="1"/>
<dbReference type="EMBL" id="CP000792">
    <property type="protein sequence ID" value="EAT99162.1"/>
    <property type="molecule type" value="Genomic_DNA"/>
</dbReference>
<dbReference type="RefSeq" id="WP_012001018.1">
    <property type="nucleotide sequence ID" value="NC_009802.2"/>
</dbReference>
<dbReference type="SMR" id="A7ZB36"/>
<dbReference type="STRING" id="360104.CCC13826_1778"/>
<dbReference type="KEGG" id="cco:CCC13826_1778"/>
<dbReference type="eggNOG" id="COG0302">
    <property type="taxonomic scope" value="Bacteria"/>
</dbReference>
<dbReference type="HOGENOM" id="CLU_049768_3_1_7"/>
<dbReference type="OrthoDB" id="9801207at2"/>
<dbReference type="UniPathway" id="UPA00848">
    <property type="reaction ID" value="UER00151"/>
</dbReference>
<dbReference type="Proteomes" id="UP000001121">
    <property type="component" value="Chromosome"/>
</dbReference>
<dbReference type="GO" id="GO:0005737">
    <property type="term" value="C:cytoplasm"/>
    <property type="evidence" value="ECO:0007669"/>
    <property type="project" value="TreeGrafter"/>
</dbReference>
<dbReference type="GO" id="GO:0005525">
    <property type="term" value="F:GTP binding"/>
    <property type="evidence" value="ECO:0007669"/>
    <property type="project" value="UniProtKB-KW"/>
</dbReference>
<dbReference type="GO" id="GO:0003934">
    <property type="term" value="F:GTP cyclohydrolase I activity"/>
    <property type="evidence" value="ECO:0007669"/>
    <property type="project" value="UniProtKB-UniRule"/>
</dbReference>
<dbReference type="GO" id="GO:0008270">
    <property type="term" value="F:zinc ion binding"/>
    <property type="evidence" value="ECO:0007669"/>
    <property type="project" value="UniProtKB-UniRule"/>
</dbReference>
<dbReference type="GO" id="GO:0006730">
    <property type="term" value="P:one-carbon metabolic process"/>
    <property type="evidence" value="ECO:0007669"/>
    <property type="project" value="UniProtKB-UniRule"/>
</dbReference>
<dbReference type="GO" id="GO:0006729">
    <property type="term" value="P:tetrahydrobiopterin biosynthetic process"/>
    <property type="evidence" value="ECO:0007669"/>
    <property type="project" value="TreeGrafter"/>
</dbReference>
<dbReference type="GO" id="GO:0046654">
    <property type="term" value="P:tetrahydrofolate biosynthetic process"/>
    <property type="evidence" value="ECO:0007669"/>
    <property type="project" value="UniProtKB-UniRule"/>
</dbReference>
<dbReference type="FunFam" id="3.30.1130.10:FF:000001">
    <property type="entry name" value="GTP cyclohydrolase 1"/>
    <property type="match status" value="1"/>
</dbReference>
<dbReference type="Gene3D" id="1.10.286.10">
    <property type="match status" value="1"/>
</dbReference>
<dbReference type="Gene3D" id="3.30.1130.10">
    <property type="match status" value="1"/>
</dbReference>
<dbReference type="HAMAP" id="MF_00223">
    <property type="entry name" value="FolE"/>
    <property type="match status" value="1"/>
</dbReference>
<dbReference type="InterPro" id="IPR043133">
    <property type="entry name" value="GTP-CH-I_C/QueF"/>
</dbReference>
<dbReference type="InterPro" id="IPR043134">
    <property type="entry name" value="GTP-CH-I_N"/>
</dbReference>
<dbReference type="InterPro" id="IPR001474">
    <property type="entry name" value="GTP_CycHdrlase_I"/>
</dbReference>
<dbReference type="InterPro" id="IPR018234">
    <property type="entry name" value="GTP_CycHdrlase_I_CS"/>
</dbReference>
<dbReference type="InterPro" id="IPR020602">
    <property type="entry name" value="GTP_CycHdrlase_I_dom"/>
</dbReference>
<dbReference type="NCBIfam" id="TIGR00063">
    <property type="entry name" value="folE"/>
    <property type="match status" value="1"/>
</dbReference>
<dbReference type="NCBIfam" id="NF006825">
    <property type="entry name" value="PRK09347.1-2"/>
    <property type="match status" value="1"/>
</dbReference>
<dbReference type="NCBIfam" id="NF006826">
    <property type="entry name" value="PRK09347.1-3"/>
    <property type="match status" value="1"/>
</dbReference>
<dbReference type="PANTHER" id="PTHR11109:SF7">
    <property type="entry name" value="GTP CYCLOHYDROLASE 1"/>
    <property type="match status" value="1"/>
</dbReference>
<dbReference type="PANTHER" id="PTHR11109">
    <property type="entry name" value="GTP CYCLOHYDROLASE I"/>
    <property type="match status" value="1"/>
</dbReference>
<dbReference type="Pfam" id="PF01227">
    <property type="entry name" value="GTP_cyclohydroI"/>
    <property type="match status" value="1"/>
</dbReference>
<dbReference type="SUPFAM" id="SSF55620">
    <property type="entry name" value="Tetrahydrobiopterin biosynthesis enzymes-like"/>
    <property type="match status" value="1"/>
</dbReference>
<dbReference type="PROSITE" id="PS00859">
    <property type="entry name" value="GTP_CYCLOHYDROL_1_1"/>
    <property type="match status" value="1"/>
</dbReference>
<reference key="1">
    <citation type="submission" date="2007-10" db="EMBL/GenBank/DDBJ databases">
        <title>Genome sequence of Campylobacter concisus 13826 isolated from human feces.</title>
        <authorList>
            <person name="Fouts D.E."/>
            <person name="Mongodin E.F."/>
            <person name="Puiu D."/>
            <person name="Sebastian Y."/>
            <person name="Miller W.G."/>
            <person name="Mandrell R.E."/>
            <person name="On S."/>
            <person name="Nelson K.E."/>
        </authorList>
    </citation>
    <scope>NUCLEOTIDE SEQUENCE [LARGE SCALE GENOMIC DNA]</scope>
    <source>
        <strain>13826</strain>
    </source>
</reference>
<gene>
    <name evidence="1" type="primary">folE</name>
    <name type="ordered locus">Ccon26_00730</name>
    <name type="ORF">CCC13826_1778</name>
</gene>
<accession>A7ZB36</accession>
<organism>
    <name type="scientific">Campylobacter concisus (strain 13826)</name>
    <dbReference type="NCBI Taxonomy" id="360104"/>
    <lineage>
        <taxon>Bacteria</taxon>
        <taxon>Pseudomonadati</taxon>
        <taxon>Campylobacterota</taxon>
        <taxon>Epsilonproteobacteria</taxon>
        <taxon>Campylobacterales</taxon>
        <taxon>Campylobacteraceae</taxon>
        <taxon>Campylobacter</taxon>
    </lineage>
</organism>
<feature type="chain" id="PRO_1000071760" description="GTP cyclohydrolase 1">
    <location>
        <begin position="1"/>
        <end position="190"/>
    </location>
</feature>
<feature type="binding site" evidence="1">
    <location>
        <position position="75"/>
    </location>
    <ligand>
        <name>Zn(2+)</name>
        <dbReference type="ChEBI" id="CHEBI:29105"/>
    </ligand>
</feature>
<feature type="binding site" evidence="1">
    <location>
        <position position="78"/>
    </location>
    <ligand>
        <name>Zn(2+)</name>
        <dbReference type="ChEBI" id="CHEBI:29105"/>
    </ligand>
</feature>
<feature type="binding site" evidence="1">
    <location>
        <position position="146"/>
    </location>
    <ligand>
        <name>Zn(2+)</name>
        <dbReference type="ChEBI" id="CHEBI:29105"/>
    </ligand>
</feature>
<sequence>MQESFENSVKNMLTIIGEDPNREGLIKTPERVYKAFKFLTSGYEQDPKEVLGDALFTSSNNEMVLMRNIEFYSLCEHHLLPIIGRVHVAYIPNGKVVGLSKIPRMVNIYARRLQIQEQMTEQIAKALEDVIAPKGVGVVVEARHMCVEMRGVEKINSTTTTSALRGCFIKNADTRREFFSLINSPRETHF</sequence>
<comment type="catalytic activity">
    <reaction evidence="1">
        <text>GTP + H2O = 7,8-dihydroneopterin 3'-triphosphate + formate + H(+)</text>
        <dbReference type="Rhea" id="RHEA:17473"/>
        <dbReference type="ChEBI" id="CHEBI:15377"/>
        <dbReference type="ChEBI" id="CHEBI:15378"/>
        <dbReference type="ChEBI" id="CHEBI:15740"/>
        <dbReference type="ChEBI" id="CHEBI:37565"/>
        <dbReference type="ChEBI" id="CHEBI:58462"/>
        <dbReference type="EC" id="3.5.4.16"/>
    </reaction>
</comment>
<comment type="pathway">
    <text evidence="1">Cofactor biosynthesis; 7,8-dihydroneopterin triphosphate biosynthesis; 7,8-dihydroneopterin triphosphate from GTP: step 1/1.</text>
</comment>
<comment type="subunit">
    <text evidence="1">Homomer.</text>
</comment>
<comment type="similarity">
    <text evidence="1">Belongs to the GTP cyclohydrolase I family.</text>
</comment>
<name>GCH1_CAMC1</name>